<gene>
    <name evidence="1" type="primary">pyrG</name>
    <name type="ordered locus">RP378</name>
</gene>
<organism>
    <name type="scientific">Rickettsia prowazekii (strain Madrid E)</name>
    <dbReference type="NCBI Taxonomy" id="272947"/>
    <lineage>
        <taxon>Bacteria</taxon>
        <taxon>Pseudomonadati</taxon>
        <taxon>Pseudomonadota</taxon>
        <taxon>Alphaproteobacteria</taxon>
        <taxon>Rickettsiales</taxon>
        <taxon>Rickettsiaceae</taxon>
        <taxon>Rickettsieae</taxon>
        <taxon>Rickettsia</taxon>
        <taxon>typhus group</taxon>
    </lineage>
</organism>
<evidence type="ECO:0000255" key="1">
    <source>
        <dbReference type="HAMAP-Rule" id="MF_01227"/>
    </source>
</evidence>
<sequence length="586" mass="66173">MVRFIFVTGGVVSSLGKGITAASLAMLLQAKGFRVSVRKLDPYLNVDPGTMNPHEHGEVYVTDDGAETDLDLGHYERFTGVTACKCDNITTGAIYSKLLKDERLGNYTGITVQVIPHVTNIIKDFIMSNTNGFDFIICEIGGTVGDIEGLPFFEAIRQIGNKLKNANCLFIHLTLLPYVKTARELKTKPTQHSVKELRAIGISPNILVCRAERNISKSAIDKIALFCNIKPEYVIPAIDQKNIYLVPIAYHNSGLENKVLNFFNINVVPSKLDKWYDIIDKIKDSNSKVKIAIITKYHKTQDAYKSVIEALNHAGIYYKYKIDVLWINAENLTEENINKKLLDINGILVPGGFGVRATQGKMIAIKYARTNNIPFFGICFGMQLATIEIAQNLIGIQDAVTEEFKIKGTKIIEKINKNCEDATIKIKNAHISKCTYSEAFECDASTVYTNIHEDSNNLSTDKLQIETNFRNMSDIEKTMRLGAYPCNLVANTIAANAYKSLEINERHRHRYKFNNEFQNIFEQHGVVFSGFSQNKQIVEIIELPELRWFVGVQFHPEFKSKPFEAHPLFIQFIKATIEYNKSNEQQ</sequence>
<accession>Q9ZDF1</accession>
<comment type="function">
    <text evidence="1">Catalyzes the ATP-dependent amination of UTP to CTP with either L-glutamine or ammonia as the source of nitrogen. Regulates intracellular CTP levels through interactions with the four ribonucleotide triphosphates.</text>
</comment>
<comment type="catalytic activity">
    <reaction evidence="1">
        <text>UTP + L-glutamine + ATP + H2O = CTP + L-glutamate + ADP + phosphate + 2 H(+)</text>
        <dbReference type="Rhea" id="RHEA:26426"/>
        <dbReference type="ChEBI" id="CHEBI:15377"/>
        <dbReference type="ChEBI" id="CHEBI:15378"/>
        <dbReference type="ChEBI" id="CHEBI:29985"/>
        <dbReference type="ChEBI" id="CHEBI:30616"/>
        <dbReference type="ChEBI" id="CHEBI:37563"/>
        <dbReference type="ChEBI" id="CHEBI:43474"/>
        <dbReference type="ChEBI" id="CHEBI:46398"/>
        <dbReference type="ChEBI" id="CHEBI:58359"/>
        <dbReference type="ChEBI" id="CHEBI:456216"/>
        <dbReference type="EC" id="6.3.4.2"/>
    </reaction>
</comment>
<comment type="catalytic activity">
    <reaction evidence="1">
        <text>L-glutamine + H2O = L-glutamate + NH4(+)</text>
        <dbReference type="Rhea" id="RHEA:15889"/>
        <dbReference type="ChEBI" id="CHEBI:15377"/>
        <dbReference type="ChEBI" id="CHEBI:28938"/>
        <dbReference type="ChEBI" id="CHEBI:29985"/>
        <dbReference type="ChEBI" id="CHEBI:58359"/>
    </reaction>
</comment>
<comment type="catalytic activity">
    <reaction evidence="1">
        <text>UTP + NH4(+) + ATP = CTP + ADP + phosphate + 2 H(+)</text>
        <dbReference type="Rhea" id="RHEA:16597"/>
        <dbReference type="ChEBI" id="CHEBI:15378"/>
        <dbReference type="ChEBI" id="CHEBI:28938"/>
        <dbReference type="ChEBI" id="CHEBI:30616"/>
        <dbReference type="ChEBI" id="CHEBI:37563"/>
        <dbReference type="ChEBI" id="CHEBI:43474"/>
        <dbReference type="ChEBI" id="CHEBI:46398"/>
        <dbReference type="ChEBI" id="CHEBI:456216"/>
    </reaction>
</comment>
<comment type="activity regulation">
    <text evidence="1">Allosterically activated by GTP, when glutamine is the substrate; GTP has no effect on the reaction when ammonia is the substrate. The allosteric effector GTP functions by stabilizing the protein conformation that binds the tetrahedral intermediate(s) formed during glutamine hydrolysis. Inhibited by the product CTP, via allosteric rather than competitive inhibition.</text>
</comment>
<comment type="pathway">
    <text evidence="1">Pyrimidine metabolism; CTP biosynthesis via de novo pathway; CTP from UDP: step 2/2.</text>
</comment>
<comment type="subunit">
    <text evidence="1">Homotetramer.</text>
</comment>
<comment type="miscellaneous">
    <text evidence="1">CTPSs have evolved a hybrid strategy for distinguishing between UTP and CTP. The overlapping regions of the product feedback inhibitory and substrate sites recognize a common feature in both compounds, the triphosphate moiety. To differentiate isosteric substrate and product pyrimidine rings, an additional pocket far from the expected kinase/ligase catalytic site, specifically recognizes the cytosine and ribose portions of the product inhibitor.</text>
</comment>
<comment type="similarity">
    <text evidence="1">Belongs to the CTP synthase family.</text>
</comment>
<reference key="1">
    <citation type="journal article" date="1998" name="Nature">
        <title>The genome sequence of Rickettsia prowazekii and the origin of mitochondria.</title>
        <authorList>
            <person name="Andersson S.G.E."/>
            <person name="Zomorodipour A."/>
            <person name="Andersson J.O."/>
            <person name="Sicheritz-Ponten T."/>
            <person name="Alsmark U.C.M."/>
            <person name="Podowski R.M."/>
            <person name="Naeslund A.K."/>
            <person name="Eriksson A.-S."/>
            <person name="Winkler H.H."/>
            <person name="Kurland C.G."/>
        </authorList>
    </citation>
    <scope>NUCLEOTIDE SEQUENCE [LARGE SCALE GENOMIC DNA]</scope>
    <source>
        <strain>Madrid E</strain>
    </source>
</reference>
<reference key="2">
    <citation type="journal article" date="2000" name="Science">
        <title>Selfish DNA in protein-coding genes of Rickettsia.</title>
        <authorList>
            <person name="Ogata H."/>
            <person name="Audic S."/>
            <person name="Barbe V."/>
            <person name="Artiguenave F."/>
            <person name="Fournier P.-E."/>
            <person name="Raoult D."/>
            <person name="Claverie J.-M."/>
        </authorList>
    </citation>
    <scope>DOMAIN RPE1</scope>
</reference>
<protein>
    <recommendedName>
        <fullName evidence="1">CTP synthase</fullName>
        <ecNumber evidence="1">6.3.4.2</ecNumber>
    </recommendedName>
    <alternativeName>
        <fullName evidence="1">Cytidine 5'-triphosphate synthase</fullName>
    </alternativeName>
    <alternativeName>
        <fullName evidence="1">Cytidine triphosphate synthetase</fullName>
        <shortName evidence="1">CTP synthetase</shortName>
        <shortName evidence="1">CTPS</shortName>
    </alternativeName>
    <alternativeName>
        <fullName evidence="1">UTP--ammonia ligase</fullName>
    </alternativeName>
</protein>
<proteinExistence type="inferred from homology"/>
<name>PYRG_RICPR</name>
<feature type="chain" id="PRO_0000138217" description="CTP synthase">
    <location>
        <begin position="1"/>
        <end position="586"/>
    </location>
</feature>
<feature type="domain" description="Glutamine amidotransferase type-1" evidence="1">
    <location>
        <begin position="290"/>
        <end position="582"/>
    </location>
</feature>
<feature type="domain" description="RPE1 insert">
    <location>
        <begin position="429"/>
        <end position="473"/>
    </location>
</feature>
<feature type="region of interest" description="Amidoligase domain" evidence="1">
    <location>
        <begin position="1"/>
        <end position="265"/>
    </location>
</feature>
<feature type="active site" description="Nucleophile; for glutamine hydrolysis" evidence="1">
    <location>
        <position position="379"/>
    </location>
</feature>
<feature type="active site" evidence="1">
    <location>
        <position position="555"/>
    </location>
</feature>
<feature type="active site" evidence="1">
    <location>
        <position position="557"/>
    </location>
</feature>
<feature type="binding site" evidence="1">
    <location>
        <position position="13"/>
    </location>
    <ligand>
        <name>CTP</name>
        <dbReference type="ChEBI" id="CHEBI:37563"/>
        <note>allosteric inhibitor</note>
    </ligand>
</feature>
<feature type="binding site" evidence="1">
    <location>
        <position position="13"/>
    </location>
    <ligand>
        <name>UTP</name>
        <dbReference type="ChEBI" id="CHEBI:46398"/>
    </ligand>
</feature>
<feature type="binding site" evidence="1">
    <location>
        <begin position="14"/>
        <end position="19"/>
    </location>
    <ligand>
        <name>ATP</name>
        <dbReference type="ChEBI" id="CHEBI:30616"/>
    </ligand>
</feature>
<feature type="binding site" evidence="1">
    <location>
        <position position="71"/>
    </location>
    <ligand>
        <name>ATP</name>
        <dbReference type="ChEBI" id="CHEBI:30616"/>
    </ligand>
</feature>
<feature type="binding site" evidence="1">
    <location>
        <position position="71"/>
    </location>
    <ligand>
        <name>Mg(2+)</name>
        <dbReference type="ChEBI" id="CHEBI:18420"/>
    </ligand>
</feature>
<feature type="binding site" evidence="1">
    <location>
        <position position="139"/>
    </location>
    <ligand>
        <name>Mg(2+)</name>
        <dbReference type="ChEBI" id="CHEBI:18420"/>
    </ligand>
</feature>
<feature type="binding site" evidence="1">
    <location>
        <begin position="146"/>
        <end position="148"/>
    </location>
    <ligand>
        <name>CTP</name>
        <dbReference type="ChEBI" id="CHEBI:37563"/>
        <note>allosteric inhibitor</note>
    </ligand>
</feature>
<feature type="binding site" evidence="1">
    <location>
        <begin position="186"/>
        <end position="191"/>
    </location>
    <ligand>
        <name>CTP</name>
        <dbReference type="ChEBI" id="CHEBI:37563"/>
        <note>allosteric inhibitor</note>
    </ligand>
</feature>
<feature type="binding site" evidence="1">
    <location>
        <begin position="186"/>
        <end position="191"/>
    </location>
    <ligand>
        <name>UTP</name>
        <dbReference type="ChEBI" id="CHEBI:46398"/>
    </ligand>
</feature>
<feature type="binding site" evidence="1">
    <location>
        <position position="222"/>
    </location>
    <ligand>
        <name>CTP</name>
        <dbReference type="ChEBI" id="CHEBI:37563"/>
        <note>allosteric inhibitor</note>
    </ligand>
</feature>
<feature type="binding site" evidence="1">
    <location>
        <position position="222"/>
    </location>
    <ligand>
        <name>UTP</name>
        <dbReference type="ChEBI" id="CHEBI:46398"/>
    </ligand>
</feature>
<feature type="binding site" evidence="1">
    <location>
        <position position="352"/>
    </location>
    <ligand>
        <name>L-glutamine</name>
        <dbReference type="ChEBI" id="CHEBI:58359"/>
    </ligand>
</feature>
<feature type="binding site" evidence="1">
    <location>
        <begin position="380"/>
        <end position="383"/>
    </location>
    <ligand>
        <name>L-glutamine</name>
        <dbReference type="ChEBI" id="CHEBI:58359"/>
    </ligand>
</feature>
<feature type="binding site" evidence="1">
    <location>
        <position position="403"/>
    </location>
    <ligand>
        <name>L-glutamine</name>
        <dbReference type="ChEBI" id="CHEBI:58359"/>
    </ligand>
</feature>
<feature type="binding site" evidence="1">
    <location>
        <position position="510"/>
    </location>
    <ligand>
        <name>L-glutamine</name>
        <dbReference type="ChEBI" id="CHEBI:58359"/>
    </ligand>
</feature>
<keyword id="KW-0067">ATP-binding</keyword>
<keyword id="KW-0315">Glutamine amidotransferase</keyword>
<keyword id="KW-0436">Ligase</keyword>
<keyword id="KW-0460">Magnesium</keyword>
<keyword id="KW-0479">Metal-binding</keyword>
<keyword id="KW-0547">Nucleotide-binding</keyword>
<keyword id="KW-0665">Pyrimidine biosynthesis</keyword>
<keyword id="KW-1185">Reference proteome</keyword>
<dbReference type="EC" id="6.3.4.2" evidence="1"/>
<dbReference type="EMBL" id="AJ235271">
    <property type="protein sequence ID" value="CAA14837.1"/>
    <property type="molecule type" value="Genomic_DNA"/>
</dbReference>
<dbReference type="PIR" id="C71695">
    <property type="entry name" value="C71695"/>
</dbReference>
<dbReference type="RefSeq" id="NP_220761.1">
    <property type="nucleotide sequence ID" value="NC_000963.1"/>
</dbReference>
<dbReference type="RefSeq" id="WP_004597537.1">
    <property type="nucleotide sequence ID" value="NC_000963.1"/>
</dbReference>
<dbReference type="SMR" id="Q9ZDF1"/>
<dbReference type="STRING" id="272947.gene:17555458"/>
<dbReference type="EnsemblBacteria" id="CAA14837">
    <property type="protein sequence ID" value="CAA14837"/>
    <property type="gene ID" value="CAA14837"/>
</dbReference>
<dbReference type="KEGG" id="rpr:RP378"/>
<dbReference type="PATRIC" id="fig|272947.5.peg.390"/>
<dbReference type="eggNOG" id="COG0504">
    <property type="taxonomic scope" value="Bacteria"/>
</dbReference>
<dbReference type="HOGENOM" id="CLU_011675_5_0_5"/>
<dbReference type="OrthoDB" id="9801107at2"/>
<dbReference type="UniPathway" id="UPA00159">
    <property type="reaction ID" value="UER00277"/>
</dbReference>
<dbReference type="Proteomes" id="UP000002480">
    <property type="component" value="Chromosome"/>
</dbReference>
<dbReference type="GO" id="GO:0097268">
    <property type="term" value="C:cytoophidium"/>
    <property type="evidence" value="ECO:0007669"/>
    <property type="project" value="TreeGrafter"/>
</dbReference>
<dbReference type="GO" id="GO:0005737">
    <property type="term" value="C:cytoplasm"/>
    <property type="evidence" value="ECO:0007669"/>
    <property type="project" value="TreeGrafter"/>
</dbReference>
<dbReference type="GO" id="GO:0005524">
    <property type="term" value="F:ATP binding"/>
    <property type="evidence" value="ECO:0007669"/>
    <property type="project" value="UniProtKB-KW"/>
</dbReference>
<dbReference type="GO" id="GO:0003883">
    <property type="term" value="F:CTP synthase activity"/>
    <property type="evidence" value="ECO:0007669"/>
    <property type="project" value="UniProtKB-UniRule"/>
</dbReference>
<dbReference type="GO" id="GO:0004359">
    <property type="term" value="F:glutaminase activity"/>
    <property type="evidence" value="ECO:0007669"/>
    <property type="project" value="RHEA"/>
</dbReference>
<dbReference type="GO" id="GO:0042802">
    <property type="term" value="F:identical protein binding"/>
    <property type="evidence" value="ECO:0007669"/>
    <property type="project" value="TreeGrafter"/>
</dbReference>
<dbReference type="GO" id="GO:0046872">
    <property type="term" value="F:metal ion binding"/>
    <property type="evidence" value="ECO:0007669"/>
    <property type="project" value="UniProtKB-KW"/>
</dbReference>
<dbReference type="GO" id="GO:0044210">
    <property type="term" value="P:'de novo' CTP biosynthetic process"/>
    <property type="evidence" value="ECO:0007669"/>
    <property type="project" value="UniProtKB-UniRule"/>
</dbReference>
<dbReference type="GO" id="GO:0019856">
    <property type="term" value="P:pyrimidine nucleobase biosynthetic process"/>
    <property type="evidence" value="ECO:0007669"/>
    <property type="project" value="TreeGrafter"/>
</dbReference>
<dbReference type="CDD" id="cd03113">
    <property type="entry name" value="CTPS_N"/>
    <property type="match status" value="1"/>
</dbReference>
<dbReference type="CDD" id="cd01746">
    <property type="entry name" value="GATase1_CTP_Synthase"/>
    <property type="match status" value="1"/>
</dbReference>
<dbReference type="FunFam" id="3.40.50.300:FF:000009">
    <property type="entry name" value="CTP synthase"/>
    <property type="match status" value="1"/>
</dbReference>
<dbReference type="Gene3D" id="3.40.50.880">
    <property type="match status" value="1"/>
</dbReference>
<dbReference type="Gene3D" id="3.40.50.300">
    <property type="entry name" value="P-loop containing nucleotide triphosphate hydrolases"/>
    <property type="match status" value="1"/>
</dbReference>
<dbReference type="HAMAP" id="MF_01227">
    <property type="entry name" value="PyrG"/>
    <property type="match status" value="1"/>
</dbReference>
<dbReference type="InterPro" id="IPR029062">
    <property type="entry name" value="Class_I_gatase-like"/>
</dbReference>
<dbReference type="InterPro" id="IPR004468">
    <property type="entry name" value="CTP_synthase"/>
</dbReference>
<dbReference type="InterPro" id="IPR017456">
    <property type="entry name" value="CTP_synthase_N"/>
</dbReference>
<dbReference type="InterPro" id="IPR017926">
    <property type="entry name" value="GATASE"/>
</dbReference>
<dbReference type="InterPro" id="IPR033828">
    <property type="entry name" value="GATase1_CTP_Synthase"/>
</dbReference>
<dbReference type="InterPro" id="IPR027417">
    <property type="entry name" value="P-loop_NTPase"/>
</dbReference>
<dbReference type="NCBIfam" id="NF003792">
    <property type="entry name" value="PRK05380.1"/>
    <property type="match status" value="1"/>
</dbReference>
<dbReference type="NCBIfam" id="TIGR00337">
    <property type="entry name" value="PyrG"/>
    <property type="match status" value="1"/>
</dbReference>
<dbReference type="PANTHER" id="PTHR11550">
    <property type="entry name" value="CTP SYNTHASE"/>
    <property type="match status" value="1"/>
</dbReference>
<dbReference type="PANTHER" id="PTHR11550:SF0">
    <property type="entry name" value="CTP SYNTHASE-RELATED"/>
    <property type="match status" value="1"/>
</dbReference>
<dbReference type="Pfam" id="PF06418">
    <property type="entry name" value="CTP_synth_N"/>
    <property type="match status" value="1"/>
</dbReference>
<dbReference type="Pfam" id="PF00117">
    <property type="entry name" value="GATase"/>
    <property type="match status" value="1"/>
</dbReference>
<dbReference type="SUPFAM" id="SSF52317">
    <property type="entry name" value="Class I glutamine amidotransferase-like"/>
    <property type="match status" value="1"/>
</dbReference>
<dbReference type="SUPFAM" id="SSF52540">
    <property type="entry name" value="P-loop containing nucleoside triphosphate hydrolases"/>
    <property type="match status" value="1"/>
</dbReference>
<dbReference type="PROSITE" id="PS51273">
    <property type="entry name" value="GATASE_TYPE_1"/>
    <property type="match status" value="1"/>
</dbReference>